<organism>
    <name type="scientific">Nitrobacter winogradskyi (strain ATCC 25391 / DSM 10237 / CIP 104748 / NCIMB 11846 / Nb-255)</name>
    <dbReference type="NCBI Taxonomy" id="323098"/>
    <lineage>
        <taxon>Bacteria</taxon>
        <taxon>Pseudomonadati</taxon>
        <taxon>Pseudomonadota</taxon>
        <taxon>Alphaproteobacteria</taxon>
        <taxon>Hyphomicrobiales</taxon>
        <taxon>Nitrobacteraceae</taxon>
        <taxon>Nitrobacter</taxon>
    </lineage>
</organism>
<comment type="function">
    <text evidence="1">One of the early assembly proteins it binds 23S rRNA. One of the proteins that surrounds the polypeptide exit tunnel on the outside of the ribosome. Forms the main docking site for trigger factor binding to the ribosome.</text>
</comment>
<comment type="subunit">
    <text evidence="1">Part of the 50S ribosomal subunit. Contacts protein L29, and trigger factor when it is bound to the ribosome.</text>
</comment>
<comment type="similarity">
    <text evidence="1">Belongs to the universal ribosomal protein uL23 family.</text>
</comment>
<name>RL23_NITWN</name>
<gene>
    <name evidence="1" type="primary">rplW</name>
    <name type="ordered locus">Nwi_1366</name>
</gene>
<sequence>MTIDANHYDVIVAPVITEKATMASEYNKVVFKVARKATKPQIKEAVEKLFDVKVKSVNTLVRKGKTKVFRGRLGSHSDNKRAVVTLEEGHRIDVTTGL</sequence>
<feature type="chain" id="PRO_0000272785" description="Large ribosomal subunit protein uL23">
    <location>
        <begin position="1"/>
        <end position="98"/>
    </location>
</feature>
<reference key="1">
    <citation type="journal article" date="2006" name="Appl. Environ. Microbiol.">
        <title>Genome sequence of the chemolithoautotrophic nitrite-oxidizing bacterium Nitrobacter winogradskyi Nb-255.</title>
        <authorList>
            <person name="Starkenburg S.R."/>
            <person name="Chain P.S.G."/>
            <person name="Sayavedra-Soto L.A."/>
            <person name="Hauser L."/>
            <person name="Land M.L."/>
            <person name="Larimer F.W."/>
            <person name="Malfatti S.A."/>
            <person name="Klotz M.G."/>
            <person name="Bottomley P.J."/>
            <person name="Arp D.J."/>
            <person name="Hickey W.J."/>
        </authorList>
    </citation>
    <scope>NUCLEOTIDE SEQUENCE [LARGE SCALE GENOMIC DNA]</scope>
    <source>
        <strain>ATCC 25391 / DSM 10237 / CIP 104748 / NCIMB 11846 / Nb-255</strain>
    </source>
</reference>
<evidence type="ECO:0000255" key="1">
    <source>
        <dbReference type="HAMAP-Rule" id="MF_01369"/>
    </source>
</evidence>
<evidence type="ECO:0000305" key="2"/>
<keyword id="KW-1185">Reference proteome</keyword>
<keyword id="KW-0687">Ribonucleoprotein</keyword>
<keyword id="KW-0689">Ribosomal protein</keyword>
<keyword id="KW-0694">RNA-binding</keyword>
<keyword id="KW-0699">rRNA-binding</keyword>
<accession>Q3SSW4</accession>
<dbReference type="EMBL" id="CP000115">
    <property type="protein sequence ID" value="ABA04627.1"/>
    <property type="molecule type" value="Genomic_DNA"/>
</dbReference>
<dbReference type="RefSeq" id="WP_011314643.1">
    <property type="nucleotide sequence ID" value="NC_007406.1"/>
</dbReference>
<dbReference type="SMR" id="Q3SSW4"/>
<dbReference type="STRING" id="323098.Nwi_1366"/>
<dbReference type="KEGG" id="nwi:Nwi_1366"/>
<dbReference type="eggNOG" id="COG0089">
    <property type="taxonomic scope" value="Bacteria"/>
</dbReference>
<dbReference type="HOGENOM" id="CLU_037562_3_1_5"/>
<dbReference type="OrthoDB" id="9793353at2"/>
<dbReference type="Proteomes" id="UP000002531">
    <property type="component" value="Chromosome"/>
</dbReference>
<dbReference type="GO" id="GO:1990904">
    <property type="term" value="C:ribonucleoprotein complex"/>
    <property type="evidence" value="ECO:0007669"/>
    <property type="project" value="UniProtKB-KW"/>
</dbReference>
<dbReference type="GO" id="GO:0005840">
    <property type="term" value="C:ribosome"/>
    <property type="evidence" value="ECO:0007669"/>
    <property type="project" value="UniProtKB-KW"/>
</dbReference>
<dbReference type="GO" id="GO:0019843">
    <property type="term" value="F:rRNA binding"/>
    <property type="evidence" value="ECO:0007669"/>
    <property type="project" value="UniProtKB-UniRule"/>
</dbReference>
<dbReference type="GO" id="GO:0003735">
    <property type="term" value="F:structural constituent of ribosome"/>
    <property type="evidence" value="ECO:0007669"/>
    <property type="project" value="InterPro"/>
</dbReference>
<dbReference type="GO" id="GO:0006412">
    <property type="term" value="P:translation"/>
    <property type="evidence" value="ECO:0007669"/>
    <property type="project" value="UniProtKB-UniRule"/>
</dbReference>
<dbReference type="FunFam" id="3.30.70.330:FF:000001">
    <property type="entry name" value="50S ribosomal protein L23"/>
    <property type="match status" value="1"/>
</dbReference>
<dbReference type="Gene3D" id="3.30.70.330">
    <property type="match status" value="1"/>
</dbReference>
<dbReference type="HAMAP" id="MF_01369_B">
    <property type="entry name" value="Ribosomal_uL23_B"/>
    <property type="match status" value="1"/>
</dbReference>
<dbReference type="InterPro" id="IPR012677">
    <property type="entry name" value="Nucleotide-bd_a/b_plait_sf"/>
</dbReference>
<dbReference type="InterPro" id="IPR013025">
    <property type="entry name" value="Ribosomal_uL23-like"/>
</dbReference>
<dbReference type="InterPro" id="IPR012678">
    <property type="entry name" value="Ribosomal_uL23/eL15/eS24_sf"/>
</dbReference>
<dbReference type="InterPro" id="IPR001014">
    <property type="entry name" value="Ribosomal_uL23_CS"/>
</dbReference>
<dbReference type="NCBIfam" id="NF004359">
    <property type="entry name" value="PRK05738.1-3"/>
    <property type="match status" value="1"/>
</dbReference>
<dbReference type="NCBIfam" id="NF004360">
    <property type="entry name" value="PRK05738.1-5"/>
    <property type="match status" value="1"/>
</dbReference>
<dbReference type="NCBIfam" id="NF004363">
    <property type="entry name" value="PRK05738.2-4"/>
    <property type="match status" value="1"/>
</dbReference>
<dbReference type="PANTHER" id="PTHR11620">
    <property type="entry name" value="60S RIBOSOMAL PROTEIN L23A"/>
    <property type="match status" value="1"/>
</dbReference>
<dbReference type="Pfam" id="PF00276">
    <property type="entry name" value="Ribosomal_L23"/>
    <property type="match status" value="1"/>
</dbReference>
<dbReference type="SUPFAM" id="SSF54189">
    <property type="entry name" value="Ribosomal proteins S24e, L23 and L15e"/>
    <property type="match status" value="1"/>
</dbReference>
<dbReference type="PROSITE" id="PS00050">
    <property type="entry name" value="RIBOSOMAL_L23"/>
    <property type="match status" value="1"/>
</dbReference>
<protein>
    <recommendedName>
        <fullName evidence="1">Large ribosomal subunit protein uL23</fullName>
    </recommendedName>
    <alternativeName>
        <fullName evidence="2">50S ribosomal protein L23</fullName>
    </alternativeName>
</protein>
<proteinExistence type="inferred from homology"/>